<reference key="1">
    <citation type="journal article" date="2005" name="Nucleic Acids Res.">
        <title>Genome dynamics and diversity of Shigella species, the etiologic agents of bacillary dysentery.</title>
        <authorList>
            <person name="Yang F."/>
            <person name="Yang J."/>
            <person name="Zhang X."/>
            <person name="Chen L."/>
            <person name="Jiang Y."/>
            <person name="Yan Y."/>
            <person name="Tang X."/>
            <person name="Wang J."/>
            <person name="Xiong Z."/>
            <person name="Dong J."/>
            <person name="Xue Y."/>
            <person name="Zhu Y."/>
            <person name="Xu X."/>
            <person name="Sun L."/>
            <person name="Chen S."/>
            <person name="Nie H."/>
            <person name="Peng J."/>
            <person name="Xu J."/>
            <person name="Wang Y."/>
            <person name="Yuan Z."/>
            <person name="Wen Y."/>
            <person name="Yao Z."/>
            <person name="Shen Y."/>
            <person name="Qiang B."/>
            <person name="Hou Y."/>
            <person name="Yu J."/>
            <person name="Jin Q."/>
        </authorList>
    </citation>
    <scope>NUCLEOTIDE SEQUENCE [LARGE SCALE GENOMIC DNA]</scope>
    <source>
        <strain>Sd197</strain>
    </source>
</reference>
<organism>
    <name type="scientific">Shigella dysenteriae serotype 1 (strain Sd197)</name>
    <dbReference type="NCBI Taxonomy" id="300267"/>
    <lineage>
        <taxon>Bacteria</taxon>
        <taxon>Pseudomonadati</taxon>
        <taxon>Pseudomonadota</taxon>
        <taxon>Gammaproteobacteria</taxon>
        <taxon>Enterobacterales</taxon>
        <taxon>Enterobacteriaceae</taxon>
        <taxon>Shigella</taxon>
    </lineage>
</organism>
<accession>Q32BW1</accession>
<comment type="function">
    <text evidence="2">Folate-binding protein involved in regulating the level of ATP-DnaA and in the modification of some tRNAs. It is probably a key factor in regulatory networks that act via tRNA modification, such as initiation of chromosomal replication.</text>
</comment>
<comment type="subcellular location">
    <subcellularLocation>
        <location evidence="2">Cytoplasm</location>
    </subcellularLocation>
</comment>
<comment type="similarity">
    <text evidence="2">Belongs to the tRNA-modifying YgfZ family.</text>
</comment>
<dbReference type="EMBL" id="CP000034">
    <property type="protein sequence ID" value="ABB63194.1"/>
    <property type="molecule type" value="Genomic_DNA"/>
</dbReference>
<dbReference type="RefSeq" id="WP_000886092.1">
    <property type="nucleotide sequence ID" value="NC_007606.1"/>
</dbReference>
<dbReference type="RefSeq" id="YP_404685.1">
    <property type="nucleotide sequence ID" value="NC_007606.1"/>
</dbReference>
<dbReference type="SMR" id="Q32BW1"/>
<dbReference type="STRING" id="300267.SDY_3184"/>
<dbReference type="EnsemblBacteria" id="ABB63194">
    <property type="protein sequence ID" value="ABB63194"/>
    <property type="gene ID" value="SDY_3184"/>
</dbReference>
<dbReference type="KEGG" id="sdy:SDY_3184"/>
<dbReference type="PATRIC" id="fig|300267.13.peg.3805"/>
<dbReference type="HOGENOM" id="CLU_007884_6_1_6"/>
<dbReference type="Proteomes" id="UP000002716">
    <property type="component" value="Chromosome"/>
</dbReference>
<dbReference type="GO" id="GO:0005737">
    <property type="term" value="C:cytoplasm"/>
    <property type="evidence" value="ECO:0007669"/>
    <property type="project" value="UniProtKB-SubCell"/>
</dbReference>
<dbReference type="GO" id="GO:0005542">
    <property type="term" value="F:folic acid binding"/>
    <property type="evidence" value="ECO:0007669"/>
    <property type="project" value="UniProtKB-UniRule"/>
</dbReference>
<dbReference type="GO" id="GO:0016226">
    <property type="term" value="P:iron-sulfur cluster assembly"/>
    <property type="evidence" value="ECO:0007669"/>
    <property type="project" value="TreeGrafter"/>
</dbReference>
<dbReference type="GO" id="GO:0009451">
    <property type="term" value="P:RNA modification"/>
    <property type="evidence" value="ECO:0007669"/>
    <property type="project" value="InterPro"/>
</dbReference>
<dbReference type="GO" id="GO:0008033">
    <property type="term" value="P:tRNA processing"/>
    <property type="evidence" value="ECO:0007669"/>
    <property type="project" value="UniProtKB-UniRule"/>
</dbReference>
<dbReference type="FunFam" id="2.40.30.160:FF:000001">
    <property type="entry name" value="tRNA-modifying protein YgfZ"/>
    <property type="match status" value="1"/>
</dbReference>
<dbReference type="FunFam" id="3.30.70.1400:FF:000002">
    <property type="entry name" value="tRNA-modifying protein YgfZ"/>
    <property type="match status" value="1"/>
</dbReference>
<dbReference type="FunFam" id="3.30.70.1630:FF:000001">
    <property type="entry name" value="tRNA-modifying protein YgfZ"/>
    <property type="match status" value="1"/>
</dbReference>
<dbReference type="Gene3D" id="2.40.30.160">
    <property type="match status" value="1"/>
</dbReference>
<dbReference type="Gene3D" id="3.30.70.1630">
    <property type="match status" value="1"/>
</dbReference>
<dbReference type="Gene3D" id="3.30.70.1400">
    <property type="entry name" value="Aminomethyltransferase beta-barrel domains"/>
    <property type="match status" value="1"/>
</dbReference>
<dbReference type="HAMAP" id="MF_01175">
    <property type="entry name" value="tRNA_modifying_YgfZ"/>
    <property type="match status" value="1"/>
</dbReference>
<dbReference type="InterPro" id="IPR006222">
    <property type="entry name" value="GCV_T_N"/>
</dbReference>
<dbReference type="InterPro" id="IPR029043">
    <property type="entry name" value="GcvT/YgfZ_C"/>
</dbReference>
<dbReference type="InterPro" id="IPR023758">
    <property type="entry name" value="tRNA-modifying_YgfZ"/>
</dbReference>
<dbReference type="InterPro" id="IPR045179">
    <property type="entry name" value="YgfZ/GcvT"/>
</dbReference>
<dbReference type="InterPro" id="IPR017703">
    <property type="entry name" value="YgfZ/GcvT_CS"/>
</dbReference>
<dbReference type="InterPro" id="IPR048451">
    <property type="entry name" value="YgfZ_barrel"/>
</dbReference>
<dbReference type="NCBIfam" id="NF007110">
    <property type="entry name" value="PRK09559.1"/>
    <property type="match status" value="1"/>
</dbReference>
<dbReference type="NCBIfam" id="TIGR03317">
    <property type="entry name" value="ygfZ_signature"/>
    <property type="match status" value="1"/>
</dbReference>
<dbReference type="PANTHER" id="PTHR22602">
    <property type="entry name" value="TRANSFERASE CAF17, MITOCHONDRIAL-RELATED"/>
    <property type="match status" value="1"/>
</dbReference>
<dbReference type="PANTHER" id="PTHR22602:SF0">
    <property type="entry name" value="TRANSFERASE CAF17, MITOCHONDRIAL-RELATED"/>
    <property type="match status" value="1"/>
</dbReference>
<dbReference type="Pfam" id="PF01571">
    <property type="entry name" value="GCV_T"/>
    <property type="match status" value="1"/>
</dbReference>
<dbReference type="Pfam" id="PF21130">
    <property type="entry name" value="YgfZ_barrel"/>
    <property type="match status" value="1"/>
</dbReference>
<dbReference type="SUPFAM" id="SSF101790">
    <property type="entry name" value="Aminomethyltransferase beta-barrel domain"/>
    <property type="match status" value="1"/>
</dbReference>
<dbReference type="SUPFAM" id="SSF103025">
    <property type="entry name" value="Folate-binding domain"/>
    <property type="match status" value="1"/>
</dbReference>
<keyword id="KW-0963">Cytoplasm</keyword>
<keyword id="KW-0290">Folate-binding</keyword>
<keyword id="KW-1185">Reference proteome</keyword>
<keyword id="KW-0819">tRNA processing</keyword>
<evidence type="ECO:0000250" key="1"/>
<evidence type="ECO:0000255" key="2">
    <source>
        <dbReference type="HAMAP-Rule" id="MF_01175"/>
    </source>
</evidence>
<gene>
    <name evidence="2" type="primary">ygfZ</name>
    <name type="ordered locus">SDY_3184</name>
</gene>
<feature type="initiator methionine" description="Removed" evidence="1">
    <location>
        <position position="1"/>
    </location>
</feature>
<feature type="chain" id="PRO_0000262900" description="tRNA-modifying protein YgfZ">
    <location>
        <begin position="2"/>
        <end position="326"/>
    </location>
</feature>
<feature type="binding site" evidence="2">
    <location>
        <position position="27"/>
    </location>
    <ligand>
        <name>folate</name>
        <dbReference type="ChEBI" id="CHEBI:62501"/>
    </ligand>
</feature>
<feature type="binding site" evidence="2">
    <location>
        <position position="189"/>
    </location>
    <ligand>
        <name>folate</name>
        <dbReference type="ChEBI" id="CHEBI:62501"/>
    </ligand>
</feature>
<sequence>MAFTPFPPRQPTASARLPLTLMTLDDWALATITGADSEKYMQGQVTADVSQMTEDQHLQAAHCDAKGKMWSNLRLFRDGDGFAWIERRSVREPQLTELKKYAVFSKVTIAPDDERVLLGVAGFQARAALANLFSELPSKEKQVVREGATTLLWFEHPAERFLIVTDEATANMLTDKLRGEAELNNSQQWLALNIEAGFPVIDAANSGQFIPQATNLQALGGISFKKGCYTGQEMVARAKFRGANKRALWLLAGSASRLPEAGEDLELRMGENWRRTGTVLAAVKLEDGQVVVQVVMNNDMEPDSIFRVRDDANTLHIEPLPYSLEE</sequence>
<name>YGFZ_SHIDS</name>
<protein>
    <recommendedName>
        <fullName evidence="2">tRNA-modifying protein YgfZ</fullName>
    </recommendedName>
</protein>
<proteinExistence type="inferred from homology"/>